<evidence type="ECO:0000255" key="1">
    <source>
        <dbReference type="PROSITE-ProRule" id="PRU00108"/>
    </source>
</evidence>
<evidence type="ECO:0000256" key="2">
    <source>
        <dbReference type="SAM" id="MobiDB-lite"/>
    </source>
</evidence>
<evidence type="ECO:0000305" key="3"/>
<accession>P17277</accession>
<reference key="1">
    <citation type="journal article" date="1990" name="Nucleic Acids Res.">
        <title>Specific DNA binding of the two chicken Deformed family homeodomain proteins, Chox-1.4 and Chox-a.</title>
        <authorList>
            <person name="Sasaki H."/>
            <person name="Yokoyama E."/>
            <person name="Kuroiwa A."/>
        </authorList>
    </citation>
    <scope>NUCLEOTIDE SEQUENCE [MRNA]</scope>
</reference>
<reference key="2">
    <citation type="journal article" date="1990" name="Nucleic Acids Res.">
        <title>Isolation and analysis of chick homeobox cDNA clones.</title>
        <authorList>
            <person name="Scotting P.J."/>
            <person name="Hewitt M."/>
            <person name="Keynes R.J."/>
        </authorList>
    </citation>
    <scope>NUCLEOTIDE SEQUENCE [MRNA] OF 207-273</scope>
    <source>
        <strain>Comet Hubbard hybrid</strain>
    </source>
</reference>
<keyword id="KW-0217">Developmental protein</keyword>
<keyword id="KW-0238">DNA-binding</keyword>
<keyword id="KW-0371">Homeobox</keyword>
<keyword id="KW-0539">Nucleus</keyword>
<keyword id="KW-1185">Reference proteome</keyword>
<keyword id="KW-0804">Transcription</keyword>
<keyword id="KW-0805">Transcription regulation</keyword>
<comment type="function">
    <text>Sequence-specific transcription factor which is part of a developmental regulatory system that provides cells with specific positional identities on the anterior-posterior axis. Binds to sites in the 5'-flanking sequence of its coding region with various affinities. The consensus sequences of the high and low affinity binding sites are 5'-TAATGA[CG]-3' and 5'-CTAATTTT-3'.</text>
</comment>
<comment type="subcellular location">
    <subcellularLocation>
        <location>Nucleus</location>
    </subcellularLocation>
</comment>
<comment type="domain">
    <text>The proline stretch works as a part of the transcriptional activation domain.</text>
</comment>
<comment type="similarity">
    <text evidence="3">Belongs to the Antp homeobox family. Deformed subfamily.</text>
</comment>
<organism>
    <name type="scientific">Gallus gallus</name>
    <name type="common">Chicken</name>
    <dbReference type="NCBI Taxonomy" id="9031"/>
    <lineage>
        <taxon>Eukaryota</taxon>
        <taxon>Metazoa</taxon>
        <taxon>Chordata</taxon>
        <taxon>Craniata</taxon>
        <taxon>Vertebrata</taxon>
        <taxon>Euteleostomi</taxon>
        <taxon>Archelosauria</taxon>
        <taxon>Archosauria</taxon>
        <taxon>Dinosauria</taxon>
        <taxon>Saurischia</taxon>
        <taxon>Theropoda</taxon>
        <taxon>Coelurosauria</taxon>
        <taxon>Aves</taxon>
        <taxon>Neognathae</taxon>
        <taxon>Galloanserae</taxon>
        <taxon>Galliformes</taxon>
        <taxon>Phasianidae</taxon>
        <taxon>Phasianinae</taxon>
        <taxon>Gallus</taxon>
    </lineage>
</organism>
<protein>
    <recommendedName>
        <fullName>Homeobox protein Hox-A4</fullName>
    </recommendedName>
    <alternativeName>
        <fullName>Homeobox protein Hox-1.4</fullName>
        <shortName>Chox-1.4</shortName>
    </alternativeName>
</protein>
<gene>
    <name type="primary">HOXA4</name>
    <name type="synonym">CHOX-1.4</name>
</gene>
<sequence length="309" mass="33478">MTMSSFLINSNYIEPKFPPCEEYTQHSGSAGSSASYHPHHPHPHAPPPPPPPPPPHLHAAHPGPALPEYFPRPRREPGYQAPAAPPGPPGPPPEALYPAQAPSYPQAPYSYSSAGSAAPGPEQPPPGASPPPPPPAKGHPGPAQPLLPGHALQRRCEAAPAAGAGTGPGCALLPDKSLPGLKGKEPVVYPWMKKIHVSTVNPNYSGGEPKRSRTAYTRQQVLELEKEFHFNRYLTRRRRIEIAHTLCLSERQVKIWFQNRRMKWKKDHKLPNTKMRSSNQPSLGQQQAKAQTQGHPRPLDGAAPNAAAL</sequence>
<feature type="chain" id="PRO_0000200052" description="Homeobox protein Hox-A4">
    <location>
        <begin position="1"/>
        <end position="309"/>
    </location>
</feature>
<feature type="DNA-binding region" description="Homeobox" evidence="1">
    <location>
        <begin position="209"/>
        <end position="268"/>
    </location>
</feature>
<feature type="region of interest" description="Disordered" evidence="2">
    <location>
        <begin position="17"/>
        <end position="148"/>
    </location>
</feature>
<feature type="region of interest" description="Disordered" evidence="2">
    <location>
        <begin position="267"/>
        <end position="309"/>
    </location>
</feature>
<feature type="short sequence motif" description="Antp-type hexapeptide">
    <location>
        <begin position="188"/>
        <end position="193"/>
    </location>
</feature>
<feature type="compositionally biased region" description="Low complexity" evidence="2">
    <location>
        <begin position="26"/>
        <end position="36"/>
    </location>
</feature>
<feature type="compositionally biased region" description="Pro residues" evidence="2">
    <location>
        <begin position="44"/>
        <end position="56"/>
    </location>
</feature>
<feature type="compositionally biased region" description="Pro residues" evidence="2">
    <location>
        <begin position="83"/>
        <end position="95"/>
    </location>
</feature>
<feature type="compositionally biased region" description="Low complexity" evidence="2">
    <location>
        <begin position="96"/>
        <end position="120"/>
    </location>
</feature>
<feature type="compositionally biased region" description="Pro residues" evidence="2">
    <location>
        <begin position="121"/>
        <end position="145"/>
    </location>
</feature>
<feature type="compositionally biased region" description="Polar residues" evidence="2">
    <location>
        <begin position="274"/>
        <end position="294"/>
    </location>
</feature>
<name>HXA4_CHICK</name>
<proteinExistence type="evidence at transcript level"/>
<dbReference type="EMBL" id="X52670">
    <property type="protein sequence ID" value="CAA36896.1"/>
    <property type="molecule type" value="mRNA"/>
</dbReference>
<dbReference type="EMBL" id="X52747">
    <property type="protein sequence ID" value="CAB57949.1"/>
    <property type="molecule type" value="mRNA"/>
</dbReference>
<dbReference type="PIR" id="S09257">
    <property type="entry name" value="S09257"/>
</dbReference>
<dbReference type="RefSeq" id="NP_001025517.1">
    <property type="nucleotide sequence ID" value="NM_001030346.3"/>
</dbReference>
<dbReference type="SMR" id="P17277"/>
<dbReference type="FunCoup" id="P17277">
    <property type="interactions" value="173"/>
</dbReference>
<dbReference type="STRING" id="9031.ENSGALP00000029207"/>
<dbReference type="PaxDb" id="9031-ENSGALP00000017984"/>
<dbReference type="Ensembl" id="ENSGALT00010004119.1">
    <property type="protein sequence ID" value="ENSGALP00010002416.1"/>
    <property type="gene ID" value="ENSGALG00010001808.1"/>
</dbReference>
<dbReference type="GeneID" id="395307"/>
<dbReference type="KEGG" id="gga:395307"/>
<dbReference type="CTD" id="3201"/>
<dbReference type="VEuPathDB" id="HostDB:geneid_395307"/>
<dbReference type="eggNOG" id="KOG0489">
    <property type="taxonomic scope" value="Eukaryota"/>
</dbReference>
<dbReference type="GeneTree" id="ENSGT00940000158988"/>
<dbReference type="HOGENOM" id="CLU_061398_0_0_1"/>
<dbReference type="InParanoid" id="P17277"/>
<dbReference type="OMA" id="EPPYTQC"/>
<dbReference type="OrthoDB" id="6159439at2759"/>
<dbReference type="PRO" id="PR:P17277"/>
<dbReference type="Proteomes" id="UP000000539">
    <property type="component" value="Chromosome 2"/>
</dbReference>
<dbReference type="GO" id="GO:0016604">
    <property type="term" value="C:nuclear body"/>
    <property type="evidence" value="ECO:0007669"/>
    <property type="project" value="Ensembl"/>
</dbReference>
<dbReference type="GO" id="GO:0005654">
    <property type="term" value="C:nucleoplasm"/>
    <property type="evidence" value="ECO:0000318"/>
    <property type="project" value="GO_Central"/>
</dbReference>
<dbReference type="GO" id="GO:0000981">
    <property type="term" value="F:DNA-binding transcription factor activity, RNA polymerase II-specific"/>
    <property type="evidence" value="ECO:0000318"/>
    <property type="project" value="GO_Central"/>
</dbReference>
<dbReference type="GO" id="GO:0000978">
    <property type="term" value="F:RNA polymerase II cis-regulatory region sequence-specific DNA binding"/>
    <property type="evidence" value="ECO:0000318"/>
    <property type="project" value="GO_Central"/>
</dbReference>
<dbReference type="GO" id="GO:0009952">
    <property type="term" value="P:anterior/posterior pattern specification"/>
    <property type="evidence" value="ECO:0000318"/>
    <property type="project" value="GO_Central"/>
</dbReference>
<dbReference type="GO" id="GO:0048704">
    <property type="term" value="P:embryonic skeletal system morphogenesis"/>
    <property type="evidence" value="ECO:0000318"/>
    <property type="project" value="GO_Central"/>
</dbReference>
<dbReference type="GO" id="GO:0045944">
    <property type="term" value="P:positive regulation of transcription by RNA polymerase II"/>
    <property type="evidence" value="ECO:0000318"/>
    <property type="project" value="GO_Central"/>
</dbReference>
<dbReference type="CDD" id="cd00086">
    <property type="entry name" value="homeodomain"/>
    <property type="match status" value="1"/>
</dbReference>
<dbReference type="FunFam" id="1.10.10.60:FF:000029">
    <property type="entry name" value="Homeobox protein Hox-D4"/>
    <property type="match status" value="1"/>
</dbReference>
<dbReference type="Gene3D" id="1.10.10.60">
    <property type="entry name" value="Homeodomain-like"/>
    <property type="match status" value="1"/>
</dbReference>
<dbReference type="InterPro" id="IPR050609">
    <property type="entry name" value="Antp_homeobox_Deformed_sf"/>
</dbReference>
<dbReference type="InterPro" id="IPR001356">
    <property type="entry name" value="HD"/>
</dbReference>
<dbReference type="InterPro" id="IPR020479">
    <property type="entry name" value="HD_metazoa"/>
</dbReference>
<dbReference type="InterPro" id="IPR001827">
    <property type="entry name" value="Homeobox_Antennapedia_CS"/>
</dbReference>
<dbReference type="InterPro" id="IPR017970">
    <property type="entry name" value="Homeobox_CS"/>
</dbReference>
<dbReference type="InterPro" id="IPR009057">
    <property type="entry name" value="Homeodomain-like_sf"/>
</dbReference>
<dbReference type="PANTHER" id="PTHR45771:SF2">
    <property type="entry name" value="HOMEOBOX PROTEIN HOX-A4"/>
    <property type="match status" value="1"/>
</dbReference>
<dbReference type="PANTHER" id="PTHR45771">
    <property type="entry name" value="HOMEOTIC PROTEIN DEFORMED"/>
    <property type="match status" value="1"/>
</dbReference>
<dbReference type="Pfam" id="PF00046">
    <property type="entry name" value="Homeodomain"/>
    <property type="match status" value="1"/>
</dbReference>
<dbReference type="PRINTS" id="PR00024">
    <property type="entry name" value="HOMEOBOX"/>
</dbReference>
<dbReference type="PRINTS" id="PR01217">
    <property type="entry name" value="PRICHEXTENSN"/>
</dbReference>
<dbReference type="SMART" id="SM00389">
    <property type="entry name" value="HOX"/>
    <property type="match status" value="1"/>
</dbReference>
<dbReference type="SUPFAM" id="SSF46689">
    <property type="entry name" value="Homeodomain-like"/>
    <property type="match status" value="1"/>
</dbReference>
<dbReference type="PROSITE" id="PS00032">
    <property type="entry name" value="ANTENNAPEDIA"/>
    <property type="match status" value="1"/>
</dbReference>
<dbReference type="PROSITE" id="PS00027">
    <property type="entry name" value="HOMEOBOX_1"/>
    <property type="match status" value="1"/>
</dbReference>
<dbReference type="PROSITE" id="PS50071">
    <property type="entry name" value="HOMEOBOX_2"/>
    <property type="match status" value="1"/>
</dbReference>